<name>RL31B_LACDB</name>
<accession>Q04C49</accession>
<reference key="1">
    <citation type="journal article" date="2006" name="Proc. Natl. Acad. Sci. U.S.A.">
        <title>Comparative genomics of the lactic acid bacteria.</title>
        <authorList>
            <person name="Makarova K.S."/>
            <person name="Slesarev A."/>
            <person name="Wolf Y.I."/>
            <person name="Sorokin A."/>
            <person name="Mirkin B."/>
            <person name="Koonin E.V."/>
            <person name="Pavlov A."/>
            <person name="Pavlova N."/>
            <person name="Karamychev V."/>
            <person name="Polouchine N."/>
            <person name="Shakhova V."/>
            <person name="Grigoriev I."/>
            <person name="Lou Y."/>
            <person name="Rohksar D."/>
            <person name="Lucas S."/>
            <person name="Huang K."/>
            <person name="Goodstein D.M."/>
            <person name="Hawkins T."/>
            <person name="Plengvidhya V."/>
            <person name="Welker D."/>
            <person name="Hughes J."/>
            <person name="Goh Y."/>
            <person name="Benson A."/>
            <person name="Baldwin K."/>
            <person name="Lee J.-H."/>
            <person name="Diaz-Muniz I."/>
            <person name="Dosti B."/>
            <person name="Smeianov V."/>
            <person name="Wechter W."/>
            <person name="Barabote R."/>
            <person name="Lorca G."/>
            <person name="Altermann E."/>
            <person name="Barrangou R."/>
            <person name="Ganesan B."/>
            <person name="Xie Y."/>
            <person name="Rawsthorne H."/>
            <person name="Tamir D."/>
            <person name="Parker C."/>
            <person name="Breidt F."/>
            <person name="Broadbent J.R."/>
            <person name="Hutkins R."/>
            <person name="O'Sullivan D."/>
            <person name="Steele J."/>
            <person name="Unlu G."/>
            <person name="Saier M.H. Jr."/>
            <person name="Klaenhammer T."/>
            <person name="Richardson P."/>
            <person name="Kozyavkin S."/>
            <person name="Weimer B.C."/>
            <person name="Mills D.A."/>
        </authorList>
    </citation>
    <scope>NUCLEOTIDE SEQUENCE [LARGE SCALE GENOMIC DNA]</scope>
    <source>
        <strain>ATCC BAA-365 / Lb-18</strain>
    </source>
</reference>
<proteinExistence type="inferred from homology"/>
<comment type="subunit">
    <text evidence="1">Part of the 50S ribosomal subunit.</text>
</comment>
<comment type="similarity">
    <text evidence="1">Belongs to the bacterial ribosomal protein bL31 family. Type B subfamily.</text>
</comment>
<evidence type="ECO:0000255" key="1">
    <source>
        <dbReference type="HAMAP-Rule" id="MF_00502"/>
    </source>
</evidence>
<evidence type="ECO:0000305" key="2"/>
<dbReference type="EMBL" id="CP000412">
    <property type="protein sequence ID" value="ABJ57973.1"/>
    <property type="molecule type" value="Genomic_DNA"/>
</dbReference>
<dbReference type="RefSeq" id="WP_003620766.1">
    <property type="nucleotide sequence ID" value="NC_008529.1"/>
</dbReference>
<dbReference type="SMR" id="Q04C49"/>
<dbReference type="KEGG" id="lbu:LBUL_0311"/>
<dbReference type="HOGENOM" id="CLU_114306_2_1_9"/>
<dbReference type="BioCyc" id="LDEL321956:LBUL_RS01455-MONOMER"/>
<dbReference type="GO" id="GO:1990904">
    <property type="term" value="C:ribonucleoprotein complex"/>
    <property type="evidence" value="ECO:0007669"/>
    <property type="project" value="UniProtKB-KW"/>
</dbReference>
<dbReference type="GO" id="GO:0005840">
    <property type="term" value="C:ribosome"/>
    <property type="evidence" value="ECO:0007669"/>
    <property type="project" value="UniProtKB-KW"/>
</dbReference>
<dbReference type="GO" id="GO:0003735">
    <property type="term" value="F:structural constituent of ribosome"/>
    <property type="evidence" value="ECO:0007669"/>
    <property type="project" value="InterPro"/>
</dbReference>
<dbReference type="GO" id="GO:0006412">
    <property type="term" value="P:translation"/>
    <property type="evidence" value="ECO:0007669"/>
    <property type="project" value="UniProtKB-UniRule"/>
</dbReference>
<dbReference type="Gene3D" id="4.10.830.30">
    <property type="entry name" value="Ribosomal protein L31"/>
    <property type="match status" value="1"/>
</dbReference>
<dbReference type="HAMAP" id="MF_00502">
    <property type="entry name" value="Ribosomal_bL31_2"/>
    <property type="match status" value="1"/>
</dbReference>
<dbReference type="InterPro" id="IPR034704">
    <property type="entry name" value="Ribosomal_bL28/bL31-like_sf"/>
</dbReference>
<dbReference type="InterPro" id="IPR002150">
    <property type="entry name" value="Ribosomal_bL31"/>
</dbReference>
<dbReference type="InterPro" id="IPR027493">
    <property type="entry name" value="Ribosomal_bL31_B"/>
</dbReference>
<dbReference type="InterPro" id="IPR042105">
    <property type="entry name" value="Ribosomal_bL31_sf"/>
</dbReference>
<dbReference type="NCBIfam" id="TIGR00105">
    <property type="entry name" value="L31"/>
    <property type="match status" value="1"/>
</dbReference>
<dbReference type="NCBIfam" id="NF002462">
    <property type="entry name" value="PRK01678.1"/>
    <property type="match status" value="1"/>
</dbReference>
<dbReference type="PANTHER" id="PTHR33280">
    <property type="entry name" value="50S RIBOSOMAL PROTEIN L31, CHLOROPLASTIC"/>
    <property type="match status" value="1"/>
</dbReference>
<dbReference type="PANTHER" id="PTHR33280:SF1">
    <property type="entry name" value="LARGE RIBOSOMAL SUBUNIT PROTEIN BL31C"/>
    <property type="match status" value="1"/>
</dbReference>
<dbReference type="Pfam" id="PF01197">
    <property type="entry name" value="Ribosomal_L31"/>
    <property type="match status" value="1"/>
</dbReference>
<dbReference type="PRINTS" id="PR01249">
    <property type="entry name" value="RIBOSOMALL31"/>
</dbReference>
<dbReference type="SUPFAM" id="SSF143800">
    <property type="entry name" value="L28p-like"/>
    <property type="match status" value="1"/>
</dbReference>
<dbReference type="PROSITE" id="PS01143">
    <property type="entry name" value="RIBOSOMAL_L31"/>
    <property type="match status" value="1"/>
</dbReference>
<gene>
    <name evidence="1" type="primary">rpmE2</name>
    <name type="ordered locus">LBUL_0311</name>
</gene>
<organism>
    <name type="scientific">Lactobacillus delbrueckii subsp. bulgaricus (strain ATCC BAA-365 / Lb-18)</name>
    <dbReference type="NCBI Taxonomy" id="321956"/>
    <lineage>
        <taxon>Bacteria</taxon>
        <taxon>Bacillati</taxon>
        <taxon>Bacillota</taxon>
        <taxon>Bacilli</taxon>
        <taxon>Lactobacillales</taxon>
        <taxon>Lactobacillaceae</taxon>
        <taxon>Lactobacillus</taxon>
    </lineage>
</organism>
<sequence length="83" mass="9407">MKKGIHPDYQEVCFMDAATGFKFVAGSTLKSSETVEFEGNTYPLIRVEISSDSHPFYTGKQKFAAADGRIERFNKKYGFNKKN</sequence>
<protein>
    <recommendedName>
        <fullName evidence="1">Large ribosomal subunit protein bL31B</fullName>
    </recommendedName>
    <alternativeName>
        <fullName evidence="2">50S ribosomal protein L31 type B</fullName>
    </alternativeName>
</protein>
<keyword id="KW-0687">Ribonucleoprotein</keyword>
<keyword id="KW-0689">Ribosomal protein</keyword>
<feature type="chain" id="PRO_1000126815" description="Large ribosomal subunit protein bL31B">
    <location>
        <begin position="1"/>
        <end position="83"/>
    </location>
</feature>